<proteinExistence type="inferred from homology"/>
<gene>
    <name evidence="1" type="primary">pckA</name>
    <name type="ordered locus">RPE_0819</name>
</gene>
<sequence length="537" mass="58141">MTETGVRNGAYGADKFGLKNLAGVTWNPGAPQLYEYALRAGEGVLSADGALCVDTGIFTGRSPKDKYTVRDANTESTVWWGGNQSITAEQFETLYQDFLKHAEGMQLFAQDLYGGADPSFQIKTRVFTEMAWHSLFIRTLLRRPETAALASFVPELTIIDLASFRADPKRHGCQSENVVAIDFTRKIVLIGGTQYAGEMKKSVFTTLNYYLPDKGVLPMHCSANVGPDGDTAIFFGLSGTGKTTLSADPNRTLIGDDEHGWGKDGVFNFEGGCYAKCIKLSAEAEPEIFAASNRFGAILENTVLDPITRKPDFNDGSKTENTRSAYPLESIPNASLTGRAGLPKNVVMLAADAFGVMPPIAKLTPAQAMYHFLSGYTAKVAGTERGVTEPSPVFSTCFGSPFLPRDPSVYGNMLRELIAKHGVDCWLVNTGWTGGIYGTGSRMPIKVTRALLTAALNGSLRNVEFRTDPYFGFAVPTALPGVPSDILDPVKTWADKAAFDVTARKLVGMFQKNFSKFEAMVDAEVRAAQPEAKLAAE</sequence>
<evidence type="ECO:0000255" key="1">
    <source>
        <dbReference type="HAMAP-Rule" id="MF_00453"/>
    </source>
</evidence>
<keyword id="KW-0067">ATP-binding</keyword>
<keyword id="KW-0963">Cytoplasm</keyword>
<keyword id="KW-0210">Decarboxylase</keyword>
<keyword id="KW-0312">Gluconeogenesis</keyword>
<keyword id="KW-0456">Lyase</keyword>
<keyword id="KW-0464">Manganese</keyword>
<keyword id="KW-0479">Metal-binding</keyword>
<keyword id="KW-0547">Nucleotide-binding</keyword>
<dbReference type="EC" id="4.1.1.49" evidence="1"/>
<dbReference type="EMBL" id="CP000463">
    <property type="protein sequence ID" value="ABJ04775.1"/>
    <property type="molecule type" value="Genomic_DNA"/>
</dbReference>
<dbReference type="SMR" id="Q07TF9"/>
<dbReference type="STRING" id="316055.RPE_0819"/>
<dbReference type="KEGG" id="rpe:RPE_0819"/>
<dbReference type="eggNOG" id="COG1866">
    <property type="taxonomic scope" value="Bacteria"/>
</dbReference>
<dbReference type="HOGENOM" id="CLU_018247_0_1_5"/>
<dbReference type="OrthoDB" id="9806325at2"/>
<dbReference type="UniPathway" id="UPA00138"/>
<dbReference type="GO" id="GO:0005829">
    <property type="term" value="C:cytosol"/>
    <property type="evidence" value="ECO:0007669"/>
    <property type="project" value="TreeGrafter"/>
</dbReference>
<dbReference type="GO" id="GO:0005524">
    <property type="term" value="F:ATP binding"/>
    <property type="evidence" value="ECO:0007669"/>
    <property type="project" value="UniProtKB-UniRule"/>
</dbReference>
<dbReference type="GO" id="GO:0046872">
    <property type="term" value="F:metal ion binding"/>
    <property type="evidence" value="ECO:0007669"/>
    <property type="project" value="UniProtKB-KW"/>
</dbReference>
<dbReference type="GO" id="GO:0004612">
    <property type="term" value="F:phosphoenolpyruvate carboxykinase (ATP) activity"/>
    <property type="evidence" value="ECO:0007669"/>
    <property type="project" value="UniProtKB-UniRule"/>
</dbReference>
<dbReference type="GO" id="GO:0006094">
    <property type="term" value="P:gluconeogenesis"/>
    <property type="evidence" value="ECO:0007669"/>
    <property type="project" value="UniProtKB-UniRule"/>
</dbReference>
<dbReference type="CDD" id="cd00484">
    <property type="entry name" value="PEPCK_ATP"/>
    <property type="match status" value="1"/>
</dbReference>
<dbReference type="Gene3D" id="3.90.228.20">
    <property type="match status" value="1"/>
</dbReference>
<dbReference type="Gene3D" id="3.40.449.10">
    <property type="entry name" value="Phosphoenolpyruvate Carboxykinase, domain 1"/>
    <property type="match status" value="1"/>
</dbReference>
<dbReference type="Gene3D" id="2.170.8.10">
    <property type="entry name" value="Phosphoenolpyruvate Carboxykinase, domain 2"/>
    <property type="match status" value="1"/>
</dbReference>
<dbReference type="HAMAP" id="MF_00453">
    <property type="entry name" value="PEPCK_ATP"/>
    <property type="match status" value="1"/>
</dbReference>
<dbReference type="InterPro" id="IPR001272">
    <property type="entry name" value="PEP_carboxykinase_ATP"/>
</dbReference>
<dbReference type="InterPro" id="IPR013035">
    <property type="entry name" value="PEP_carboxykinase_C"/>
</dbReference>
<dbReference type="InterPro" id="IPR008210">
    <property type="entry name" value="PEP_carboxykinase_N"/>
</dbReference>
<dbReference type="InterPro" id="IPR015994">
    <property type="entry name" value="PEPCK_ATP_CS"/>
</dbReference>
<dbReference type="NCBIfam" id="TIGR00224">
    <property type="entry name" value="pckA"/>
    <property type="match status" value="1"/>
</dbReference>
<dbReference type="NCBIfam" id="NF006820">
    <property type="entry name" value="PRK09344.1-2"/>
    <property type="match status" value="1"/>
</dbReference>
<dbReference type="NCBIfam" id="NF006821">
    <property type="entry name" value="PRK09344.1-3"/>
    <property type="match status" value="1"/>
</dbReference>
<dbReference type="NCBIfam" id="NF006822">
    <property type="entry name" value="PRK09344.1-4"/>
    <property type="match status" value="1"/>
</dbReference>
<dbReference type="PANTHER" id="PTHR30031:SF0">
    <property type="entry name" value="PHOSPHOENOLPYRUVATE CARBOXYKINASE (ATP)"/>
    <property type="match status" value="1"/>
</dbReference>
<dbReference type="PANTHER" id="PTHR30031">
    <property type="entry name" value="PHOSPHOENOLPYRUVATE CARBOXYKINASE ATP"/>
    <property type="match status" value="1"/>
</dbReference>
<dbReference type="Pfam" id="PF01293">
    <property type="entry name" value="PEPCK_ATP"/>
    <property type="match status" value="1"/>
</dbReference>
<dbReference type="PIRSF" id="PIRSF006294">
    <property type="entry name" value="PEP_crbxkin"/>
    <property type="match status" value="1"/>
</dbReference>
<dbReference type="SUPFAM" id="SSF68923">
    <property type="entry name" value="PEP carboxykinase N-terminal domain"/>
    <property type="match status" value="1"/>
</dbReference>
<dbReference type="SUPFAM" id="SSF53795">
    <property type="entry name" value="PEP carboxykinase-like"/>
    <property type="match status" value="1"/>
</dbReference>
<dbReference type="PROSITE" id="PS00532">
    <property type="entry name" value="PEPCK_ATP"/>
    <property type="match status" value="1"/>
</dbReference>
<feature type="chain" id="PRO_1000026343" description="Phosphoenolpyruvate carboxykinase (ATP)">
    <location>
        <begin position="1"/>
        <end position="537"/>
    </location>
</feature>
<feature type="binding site" evidence="1">
    <location>
        <position position="61"/>
    </location>
    <ligand>
        <name>substrate</name>
    </ligand>
</feature>
<feature type="binding site" evidence="1">
    <location>
        <position position="195"/>
    </location>
    <ligand>
        <name>substrate</name>
    </ligand>
</feature>
<feature type="binding site" evidence="1">
    <location>
        <position position="201"/>
    </location>
    <ligand>
        <name>ATP</name>
        <dbReference type="ChEBI" id="CHEBI:30616"/>
    </ligand>
</feature>
<feature type="binding site" evidence="1">
    <location>
        <position position="201"/>
    </location>
    <ligand>
        <name>Mn(2+)</name>
        <dbReference type="ChEBI" id="CHEBI:29035"/>
    </ligand>
</feature>
<feature type="binding site" evidence="1">
    <location>
        <position position="201"/>
    </location>
    <ligand>
        <name>substrate</name>
    </ligand>
</feature>
<feature type="binding site" evidence="1">
    <location>
        <position position="220"/>
    </location>
    <ligand>
        <name>ATP</name>
        <dbReference type="ChEBI" id="CHEBI:30616"/>
    </ligand>
</feature>
<feature type="binding site" evidence="1">
    <location>
        <position position="220"/>
    </location>
    <ligand>
        <name>Mn(2+)</name>
        <dbReference type="ChEBI" id="CHEBI:29035"/>
    </ligand>
</feature>
<feature type="binding site" evidence="1">
    <location>
        <begin position="236"/>
        <end position="244"/>
    </location>
    <ligand>
        <name>ATP</name>
        <dbReference type="ChEBI" id="CHEBI:30616"/>
    </ligand>
</feature>
<feature type="binding site" evidence="1">
    <location>
        <position position="257"/>
    </location>
    <ligand>
        <name>Mn(2+)</name>
        <dbReference type="ChEBI" id="CHEBI:29035"/>
    </ligand>
</feature>
<feature type="binding site" evidence="1">
    <location>
        <position position="285"/>
    </location>
    <ligand>
        <name>ATP</name>
        <dbReference type="ChEBI" id="CHEBI:30616"/>
    </ligand>
</feature>
<feature type="binding site" evidence="1">
    <location>
        <position position="323"/>
    </location>
    <ligand>
        <name>ATP</name>
        <dbReference type="ChEBI" id="CHEBI:30616"/>
    </ligand>
</feature>
<feature type="binding site" evidence="1">
    <location>
        <position position="323"/>
    </location>
    <ligand>
        <name>substrate</name>
    </ligand>
</feature>
<feature type="binding site" evidence="1">
    <location>
        <position position="448"/>
    </location>
    <ligand>
        <name>ATP</name>
        <dbReference type="ChEBI" id="CHEBI:30616"/>
    </ligand>
</feature>
<protein>
    <recommendedName>
        <fullName evidence="1">Phosphoenolpyruvate carboxykinase (ATP)</fullName>
        <shortName evidence="1">PCK</shortName>
        <shortName evidence="1">PEP carboxykinase</shortName>
        <shortName evidence="1">PEPCK</shortName>
        <ecNumber evidence="1">4.1.1.49</ecNumber>
    </recommendedName>
</protein>
<accession>Q07TF9</accession>
<name>PCKA_RHOP5</name>
<organism>
    <name type="scientific">Rhodopseudomonas palustris (strain BisA53)</name>
    <dbReference type="NCBI Taxonomy" id="316055"/>
    <lineage>
        <taxon>Bacteria</taxon>
        <taxon>Pseudomonadati</taxon>
        <taxon>Pseudomonadota</taxon>
        <taxon>Alphaproteobacteria</taxon>
        <taxon>Hyphomicrobiales</taxon>
        <taxon>Nitrobacteraceae</taxon>
        <taxon>Rhodopseudomonas</taxon>
    </lineage>
</organism>
<comment type="function">
    <text evidence="1">Involved in the gluconeogenesis. Catalyzes the conversion of oxaloacetate (OAA) to phosphoenolpyruvate (PEP) through direct phosphoryl transfer between the nucleoside triphosphate and OAA.</text>
</comment>
<comment type="catalytic activity">
    <reaction evidence="1">
        <text>oxaloacetate + ATP = phosphoenolpyruvate + ADP + CO2</text>
        <dbReference type="Rhea" id="RHEA:18617"/>
        <dbReference type="ChEBI" id="CHEBI:16452"/>
        <dbReference type="ChEBI" id="CHEBI:16526"/>
        <dbReference type="ChEBI" id="CHEBI:30616"/>
        <dbReference type="ChEBI" id="CHEBI:58702"/>
        <dbReference type="ChEBI" id="CHEBI:456216"/>
        <dbReference type="EC" id="4.1.1.49"/>
    </reaction>
</comment>
<comment type="cofactor">
    <cofactor evidence="1">
        <name>Mn(2+)</name>
        <dbReference type="ChEBI" id="CHEBI:29035"/>
    </cofactor>
    <text evidence="1">Binds 1 Mn(2+) ion per subunit.</text>
</comment>
<comment type="pathway">
    <text evidence="1">Carbohydrate biosynthesis; gluconeogenesis.</text>
</comment>
<comment type="subcellular location">
    <subcellularLocation>
        <location evidence="1">Cytoplasm</location>
    </subcellularLocation>
</comment>
<comment type="similarity">
    <text evidence="1">Belongs to the phosphoenolpyruvate carboxykinase (ATP) family.</text>
</comment>
<reference key="1">
    <citation type="submission" date="2006-09" db="EMBL/GenBank/DDBJ databases">
        <title>Complete sequence of Rhodopseudomonas palustris BisA53.</title>
        <authorList>
            <consortium name="US DOE Joint Genome Institute"/>
            <person name="Copeland A."/>
            <person name="Lucas S."/>
            <person name="Lapidus A."/>
            <person name="Barry K."/>
            <person name="Detter J.C."/>
            <person name="Glavina del Rio T."/>
            <person name="Hammon N."/>
            <person name="Israni S."/>
            <person name="Dalin E."/>
            <person name="Tice H."/>
            <person name="Pitluck S."/>
            <person name="Chain P."/>
            <person name="Malfatti S."/>
            <person name="Shin M."/>
            <person name="Vergez L."/>
            <person name="Schmutz J."/>
            <person name="Larimer F."/>
            <person name="Land M."/>
            <person name="Hauser L."/>
            <person name="Pelletier D.A."/>
            <person name="Kyrpides N."/>
            <person name="Kim E."/>
            <person name="Harwood C.S."/>
            <person name="Oda Y."/>
            <person name="Richardson P."/>
        </authorList>
    </citation>
    <scope>NUCLEOTIDE SEQUENCE [LARGE SCALE GENOMIC DNA]</scope>
    <source>
        <strain>BisA53</strain>
    </source>
</reference>